<comment type="function">
    <text evidence="1">Catalyzes the methylation of C-1 in cobalt-precorrin-5B to form cobalt-precorrin-6A.</text>
</comment>
<comment type="catalytic activity">
    <reaction evidence="1">
        <text>Co-precorrin-5B + S-adenosyl-L-methionine = Co-precorrin-6A + S-adenosyl-L-homocysteine</text>
        <dbReference type="Rhea" id="RHEA:26285"/>
        <dbReference type="ChEBI" id="CHEBI:57856"/>
        <dbReference type="ChEBI" id="CHEBI:59789"/>
        <dbReference type="ChEBI" id="CHEBI:60063"/>
        <dbReference type="ChEBI" id="CHEBI:60064"/>
        <dbReference type="EC" id="2.1.1.195"/>
    </reaction>
</comment>
<comment type="pathway">
    <text evidence="1">Cofactor biosynthesis; adenosylcobalamin biosynthesis; cob(II)yrinate a,c-diamide from sirohydrochlorin (anaerobic route): step 6/10.</text>
</comment>
<comment type="similarity">
    <text evidence="1">Belongs to the CbiD family.</text>
</comment>
<evidence type="ECO:0000255" key="1">
    <source>
        <dbReference type="HAMAP-Rule" id="MF_00787"/>
    </source>
</evidence>
<name>CBID_METMP</name>
<protein>
    <recommendedName>
        <fullName evidence="1">Cobalt-precorrin-5B C(1)-methyltransferase</fullName>
        <ecNumber evidence="1">2.1.1.195</ecNumber>
    </recommendedName>
    <alternativeName>
        <fullName evidence="1">Cobalt-precorrin-6A synthase</fullName>
    </alternativeName>
</protein>
<reference key="1">
    <citation type="journal article" date="2004" name="J. Bacteriol.">
        <title>Complete genome sequence of the genetically tractable hydrogenotrophic methanogen Methanococcus maripaludis.</title>
        <authorList>
            <person name="Hendrickson E.L."/>
            <person name="Kaul R."/>
            <person name="Zhou Y."/>
            <person name="Bovee D."/>
            <person name="Chapman P."/>
            <person name="Chung J."/>
            <person name="Conway de Macario E."/>
            <person name="Dodsworth J.A."/>
            <person name="Gillett W."/>
            <person name="Graham D.E."/>
            <person name="Hackett M."/>
            <person name="Haydock A.K."/>
            <person name="Kang A."/>
            <person name="Land M.L."/>
            <person name="Levy R."/>
            <person name="Lie T.J."/>
            <person name="Major T.A."/>
            <person name="Moore B.C."/>
            <person name="Porat I."/>
            <person name="Palmeiri A."/>
            <person name="Rouse G."/>
            <person name="Saenphimmachak C."/>
            <person name="Soell D."/>
            <person name="Van Dien S."/>
            <person name="Wang T."/>
            <person name="Whitman W.B."/>
            <person name="Xia Q."/>
            <person name="Zhang Y."/>
            <person name="Larimer F.W."/>
            <person name="Olson M.V."/>
            <person name="Leigh J.A."/>
        </authorList>
    </citation>
    <scope>NUCLEOTIDE SEQUENCE [LARGE SCALE GENOMIC DNA]</scope>
    <source>
        <strain>DSM 14266 / JCM 13030 / NBRC 101832 / S2 / LL</strain>
    </source>
</reference>
<sequence>MGKIDFRLEKTFGYTTGACAAAGAFSALYFLKNNEKLRFVEILNLKGDSLIIPIKNIEKQKNTAISTVEKFSGEDIDITNGMDIKIEVTLEKLDNNSSKSSSVKIIGGDGVGIVTKSGLQVNPGEYAINPKPREMIENNLKSLLENDECVTAKISVPNGDEIAKKTLNPKLGIIGGISILGTTGIVRPMSNDAYKESLAPQIDVALAYNFENLIFVPGNIGTKHAKILLNAKEDQIIEVSNFWDYMLDKAKEKGVKDITVFGHAGKIVKLAGGIFDTHSRVADARNEILCAYTSLITQDVEMLQKILQSNTTEDIVEILTEKGILTEVFEKVSKRVVERLSLRWEKINFSCIIIDMKGNILGKSD</sequence>
<accession>P61988</accession>
<gene>
    <name evidence="1" type="primary">cbiD</name>
    <name type="ordered locus">MMP1203</name>
</gene>
<keyword id="KW-0169">Cobalamin biosynthesis</keyword>
<keyword id="KW-0489">Methyltransferase</keyword>
<keyword id="KW-1185">Reference proteome</keyword>
<keyword id="KW-0949">S-adenosyl-L-methionine</keyword>
<keyword id="KW-0808">Transferase</keyword>
<organism>
    <name type="scientific">Methanococcus maripaludis (strain DSM 14266 / JCM 13030 / NBRC 101832 / S2 / LL)</name>
    <dbReference type="NCBI Taxonomy" id="267377"/>
    <lineage>
        <taxon>Archaea</taxon>
        <taxon>Methanobacteriati</taxon>
        <taxon>Methanobacteriota</taxon>
        <taxon>Methanomada group</taxon>
        <taxon>Methanococci</taxon>
        <taxon>Methanococcales</taxon>
        <taxon>Methanococcaceae</taxon>
        <taxon>Methanococcus</taxon>
    </lineage>
</organism>
<dbReference type="EC" id="2.1.1.195" evidence="1"/>
<dbReference type="EMBL" id="BX950229">
    <property type="protein sequence ID" value="CAF30759.1"/>
    <property type="molecule type" value="Genomic_DNA"/>
</dbReference>
<dbReference type="RefSeq" id="WP_011171147.1">
    <property type="nucleotide sequence ID" value="NC_005791.1"/>
</dbReference>
<dbReference type="SMR" id="P61988"/>
<dbReference type="STRING" id="267377.MMP1203"/>
<dbReference type="EnsemblBacteria" id="CAF30759">
    <property type="protein sequence ID" value="CAF30759"/>
    <property type="gene ID" value="MMP1203"/>
</dbReference>
<dbReference type="GeneID" id="2762357"/>
<dbReference type="KEGG" id="mmp:MMP1203"/>
<dbReference type="PATRIC" id="fig|267377.15.peg.1236"/>
<dbReference type="eggNOG" id="arCOG04383">
    <property type="taxonomic scope" value="Archaea"/>
</dbReference>
<dbReference type="HOGENOM" id="CLU_041273_1_0_2"/>
<dbReference type="OrthoDB" id="10423at2157"/>
<dbReference type="UniPathway" id="UPA00148">
    <property type="reaction ID" value="UER00227"/>
</dbReference>
<dbReference type="Proteomes" id="UP000000590">
    <property type="component" value="Chromosome"/>
</dbReference>
<dbReference type="GO" id="GO:0043780">
    <property type="term" value="F:cobalt-precorrin-5B C1-methyltransferase activity"/>
    <property type="evidence" value="ECO:0007669"/>
    <property type="project" value="RHEA"/>
</dbReference>
<dbReference type="GO" id="GO:0019251">
    <property type="term" value="P:anaerobic cobalamin biosynthetic process"/>
    <property type="evidence" value="ECO:0007669"/>
    <property type="project" value="UniProtKB-UniRule"/>
</dbReference>
<dbReference type="GO" id="GO:0032259">
    <property type="term" value="P:methylation"/>
    <property type="evidence" value="ECO:0007669"/>
    <property type="project" value="UniProtKB-KW"/>
</dbReference>
<dbReference type="Gene3D" id="3.30.2110.10">
    <property type="entry name" value="CbiD-like"/>
    <property type="match status" value="1"/>
</dbReference>
<dbReference type="HAMAP" id="MF_00787">
    <property type="entry name" value="CbiD"/>
    <property type="match status" value="1"/>
</dbReference>
<dbReference type="InterPro" id="IPR002748">
    <property type="entry name" value="CbiD"/>
</dbReference>
<dbReference type="InterPro" id="IPR036074">
    <property type="entry name" value="CbiD_sf"/>
</dbReference>
<dbReference type="NCBIfam" id="TIGR00312">
    <property type="entry name" value="cbiD"/>
    <property type="match status" value="1"/>
</dbReference>
<dbReference type="PANTHER" id="PTHR35863">
    <property type="entry name" value="COBALT-PRECORRIN-5B C(1)-METHYLTRANSFERASE"/>
    <property type="match status" value="1"/>
</dbReference>
<dbReference type="PANTHER" id="PTHR35863:SF1">
    <property type="entry name" value="COBALT-PRECORRIN-5B C(1)-METHYLTRANSFERASE"/>
    <property type="match status" value="1"/>
</dbReference>
<dbReference type="Pfam" id="PF01888">
    <property type="entry name" value="CbiD"/>
    <property type="match status" value="1"/>
</dbReference>
<dbReference type="PIRSF" id="PIRSF026782">
    <property type="entry name" value="CbiD"/>
    <property type="match status" value="1"/>
</dbReference>
<dbReference type="SUPFAM" id="SSF111342">
    <property type="entry name" value="CbiD-like"/>
    <property type="match status" value="1"/>
</dbReference>
<feature type="chain" id="PRO_0000141695" description="Cobalt-precorrin-5B C(1)-methyltransferase">
    <location>
        <begin position="1"/>
        <end position="365"/>
    </location>
</feature>
<proteinExistence type="inferred from homology"/>